<geneLocation type="mitochondrion"/>
<name>NU4LM_CRORS</name>
<accession>Q5G7X0</accession>
<proteinExistence type="inferred from homology"/>
<comment type="function">
    <text evidence="1">Core subunit of the mitochondrial membrane respiratory chain NADH dehydrogenase (Complex I) which catalyzes electron transfer from NADH through the respiratory chain, using ubiquinone as an electron acceptor. Part of the enzyme membrane arm which is embedded in the lipid bilayer and involved in proton translocation.</text>
</comment>
<comment type="catalytic activity">
    <reaction evidence="1">
        <text>a ubiquinone + NADH + 5 H(+)(in) = a ubiquinol + NAD(+) + 4 H(+)(out)</text>
        <dbReference type="Rhea" id="RHEA:29091"/>
        <dbReference type="Rhea" id="RHEA-COMP:9565"/>
        <dbReference type="Rhea" id="RHEA-COMP:9566"/>
        <dbReference type="ChEBI" id="CHEBI:15378"/>
        <dbReference type="ChEBI" id="CHEBI:16389"/>
        <dbReference type="ChEBI" id="CHEBI:17976"/>
        <dbReference type="ChEBI" id="CHEBI:57540"/>
        <dbReference type="ChEBI" id="CHEBI:57945"/>
        <dbReference type="EC" id="7.1.1.2"/>
    </reaction>
    <physiologicalReaction direction="left-to-right" evidence="1">
        <dbReference type="Rhea" id="RHEA:29092"/>
    </physiologicalReaction>
</comment>
<comment type="subunit">
    <text evidence="2">Core subunit of respiratory chain NADH dehydrogenase (Complex I) which is composed of 45 different subunits.</text>
</comment>
<comment type="subcellular location">
    <subcellularLocation>
        <location evidence="2">Mitochondrion inner membrane</location>
        <topology evidence="3">Multi-pass membrane protein</topology>
    </subcellularLocation>
</comment>
<comment type="similarity">
    <text evidence="4">Belongs to the complex I subunit 4L family.</text>
</comment>
<sequence length="98" mass="10611">MSLVYMNTALAFSISMLGLLMYRAHLMSSLLCLEGMMLSLFTLGAITILTTHFTLANMLPIVLLVFAACEAAVGLSLLVMVSNTYGADFVQNLNLLQC</sequence>
<reference key="1">
    <citation type="journal article" date="2005" name="Mol. Ecol.">
        <title>Nonshivering thermogenesis capacity associated to mitochondrial DNA haplotypes and gender in the greater white-toothed shrew, Crocidura russula.</title>
        <authorList>
            <person name="Fontanillas P."/>
            <person name="Depraz A."/>
            <person name="Giorgi M.S."/>
            <person name="Perrin N."/>
        </authorList>
    </citation>
    <scope>NUCLEOTIDE SEQUENCE [GENOMIC DNA]</scope>
</reference>
<dbReference type="EC" id="7.1.1.2"/>
<dbReference type="EMBL" id="AY769263">
    <property type="protein sequence ID" value="AAV33750.1"/>
    <property type="molecule type" value="Genomic_DNA"/>
</dbReference>
<dbReference type="EMBL" id="AY769264">
    <property type="protein sequence ID" value="AAV33763.1"/>
    <property type="molecule type" value="Genomic_DNA"/>
</dbReference>
<dbReference type="RefSeq" id="YP_214856.1">
    <property type="nucleotide sequence ID" value="NC_006893.1"/>
</dbReference>
<dbReference type="SMR" id="Q5G7X0"/>
<dbReference type="GO" id="GO:0005743">
    <property type="term" value="C:mitochondrial inner membrane"/>
    <property type="evidence" value="ECO:0000250"/>
    <property type="project" value="UniProtKB"/>
</dbReference>
<dbReference type="GO" id="GO:0045271">
    <property type="term" value="C:respiratory chain complex I"/>
    <property type="evidence" value="ECO:0000250"/>
    <property type="project" value="UniProtKB"/>
</dbReference>
<dbReference type="GO" id="GO:0008137">
    <property type="term" value="F:NADH dehydrogenase (ubiquinone) activity"/>
    <property type="evidence" value="ECO:0000250"/>
    <property type="project" value="UniProtKB"/>
</dbReference>
<dbReference type="GO" id="GO:0042773">
    <property type="term" value="P:ATP synthesis coupled electron transport"/>
    <property type="evidence" value="ECO:0007669"/>
    <property type="project" value="InterPro"/>
</dbReference>
<dbReference type="FunFam" id="1.10.287.3510:FF:000002">
    <property type="entry name" value="NADH-ubiquinone oxidoreductase chain 4L"/>
    <property type="match status" value="1"/>
</dbReference>
<dbReference type="Gene3D" id="1.10.287.3510">
    <property type="match status" value="1"/>
</dbReference>
<dbReference type="InterPro" id="IPR001133">
    <property type="entry name" value="NADH_UbQ_OxRdtase_chain4L/K"/>
</dbReference>
<dbReference type="InterPro" id="IPR039428">
    <property type="entry name" value="NUOK/Mnh_C1-like"/>
</dbReference>
<dbReference type="PANTHER" id="PTHR11434:SF0">
    <property type="entry name" value="NADH-UBIQUINONE OXIDOREDUCTASE CHAIN 4L"/>
    <property type="match status" value="1"/>
</dbReference>
<dbReference type="PANTHER" id="PTHR11434">
    <property type="entry name" value="NADH-UBIQUINONE OXIDOREDUCTASE SUBUNIT ND4L"/>
    <property type="match status" value="1"/>
</dbReference>
<dbReference type="Pfam" id="PF00420">
    <property type="entry name" value="Oxidored_q2"/>
    <property type="match status" value="1"/>
</dbReference>
<protein>
    <recommendedName>
        <fullName>NADH-ubiquinone oxidoreductase chain 4L</fullName>
        <ecNumber>7.1.1.2</ecNumber>
    </recommendedName>
    <alternativeName>
        <fullName>NADH dehydrogenase subunit 4L</fullName>
    </alternativeName>
</protein>
<evidence type="ECO:0000250" key="1">
    <source>
        <dbReference type="UniProtKB" id="P03901"/>
    </source>
</evidence>
<evidence type="ECO:0000250" key="2">
    <source>
        <dbReference type="UniProtKB" id="P03902"/>
    </source>
</evidence>
<evidence type="ECO:0000255" key="3"/>
<evidence type="ECO:0000305" key="4"/>
<gene>
    <name type="primary">MT-ND4L</name>
    <name type="synonym">MTND4L</name>
    <name type="synonym">NADH4L</name>
    <name type="synonym">ND4L</name>
</gene>
<feature type="chain" id="PRO_0000275001" description="NADH-ubiquinone oxidoreductase chain 4L">
    <location>
        <begin position="1"/>
        <end position="98"/>
    </location>
</feature>
<feature type="transmembrane region" description="Helical" evidence="3">
    <location>
        <begin position="1"/>
        <end position="21"/>
    </location>
</feature>
<feature type="transmembrane region" description="Helical" evidence="3">
    <location>
        <begin position="30"/>
        <end position="50"/>
    </location>
</feature>
<feature type="transmembrane region" description="Helical" evidence="3">
    <location>
        <begin position="61"/>
        <end position="81"/>
    </location>
</feature>
<organism>
    <name type="scientific">Crocidura russula</name>
    <name type="common">Greater white-toothed shrew</name>
    <dbReference type="NCBI Taxonomy" id="36802"/>
    <lineage>
        <taxon>Eukaryota</taxon>
        <taxon>Metazoa</taxon>
        <taxon>Chordata</taxon>
        <taxon>Craniata</taxon>
        <taxon>Vertebrata</taxon>
        <taxon>Euteleostomi</taxon>
        <taxon>Mammalia</taxon>
        <taxon>Eutheria</taxon>
        <taxon>Laurasiatheria</taxon>
        <taxon>Eulipotyphla</taxon>
        <taxon>Soricidae</taxon>
        <taxon>Crocidurinae</taxon>
        <taxon>Crocidura</taxon>
    </lineage>
</organism>
<keyword id="KW-0249">Electron transport</keyword>
<keyword id="KW-0472">Membrane</keyword>
<keyword id="KW-0496">Mitochondrion</keyword>
<keyword id="KW-0999">Mitochondrion inner membrane</keyword>
<keyword id="KW-0520">NAD</keyword>
<keyword id="KW-0679">Respiratory chain</keyword>
<keyword id="KW-1278">Translocase</keyword>
<keyword id="KW-0812">Transmembrane</keyword>
<keyword id="KW-1133">Transmembrane helix</keyword>
<keyword id="KW-0813">Transport</keyword>
<keyword id="KW-0830">Ubiquinone</keyword>